<comment type="function">
    <text evidence="3 4 6 7">Converts D-glucuronic acid to L-iduronic acid (IdoUA) residues. Plays an important role in the biosynthesis of the glycosaminoglycan/mucopolysaccharide dermatan sulfate.</text>
</comment>
<comment type="catalytic activity">
    <reaction evidence="3 4 6 7">
        <text>chondroitin 4'-sulfate = dermatan 4'-sulfate</text>
        <dbReference type="Rhea" id="RHEA:21084"/>
        <dbReference type="Rhea" id="RHEA-COMP:9829"/>
        <dbReference type="Rhea" id="RHEA-COMP:9965"/>
        <dbReference type="ChEBI" id="CHEBI:58422"/>
        <dbReference type="ChEBI" id="CHEBI:58465"/>
        <dbReference type="EC" id="5.1.3.19"/>
    </reaction>
</comment>
<comment type="cofactor">
    <cofactor evidence="6">
        <name>Mn(2+)</name>
        <dbReference type="ChEBI" id="CHEBI:29035"/>
    </cofactor>
    <text evidence="6">Also has weak activity in the presence of Mg(2+) or Ca(2+) ions.</text>
</comment>
<comment type="biophysicochemical properties">
    <kinetics>
        <KM evidence="6">0.12 mM for chondroitin</KM>
    </kinetics>
    <phDependence>
        <text evidence="6">Optimum pH is 5.5.</text>
    </phDependence>
</comment>
<comment type="pathway">
    <text evidence="9 10 11 12">Glycan metabolism; chondroitin sulfate biosynthesis.</text>
</comment>
<comment type="pathway">
    <text evidence="9 10 11 12">Glycan metabolism; heparan sulfate biosynthesis.</text>
</comment>
<comment type="subcellular location">
    <subcellularLocation>
        <location evidence="2 11">Endoplasmic reticulum membrane</location>
        <topology evidence="8">Multi-pass membrane protein</topology>
    </subcellularLocation>
    <subcellularLocation>
        <location evidence="2">Golgi apparatus membrane</location>
        <topology evidence="8">Multi-pass membrane protein</topology>
    </subcellularLocation>
    <subcellularLocation>
        <location evidence="2">Cytoplasmic vesicle membrane</location>
        <topology evidence="8">Multi-pass membrane protein</topology>
    </subcellularLocation>
    <subcellularLocation>
        <location evidence="6">Microsome membrane</location>
        <topology evidence="8">Multi-pass membrane protein</topology>
    </subcellularLocation>
</comment>
<comment type="tissue specificity">
    <text evidence="2">Ubiquitously expressed with higher expression in kidney and ovary and lower expression in brain, colon and thymus. Also expressed in renal cell carcinomas, brain tumors, and in a part of melanomas and adenocarcinomas from organs other than the breast. Expressed in squamous cell carcinomas (SCC), glioma, and some adenocarcinoma cell lines, but not in breast cancer cell lines or any normal tissues (at protein level).</text>
</comment>
<comment type="PTM">
    <text evidence="4 7">N-glycosylated (PubMed:19004833, Ref.7). Glycosylation is important for enzymatic activity (PubMed:19004833).</text>
</comment>
<comment type="disease" evidence="5">
    <disease id="DI-03960">
        <name>Ehlers-Danlos syndrome, musculocontractural type 2</name>
        <acronym>EDSMC2</acronym>
        <description>A form of Ehlers-Danlos syndrome characterized by progressive multisystem manifestations, including joint dislocations and deformities, skin hyperextensibility, skin bruisability and fragility with recurrent large subcutaneous hematomas, cardiac valvular, respiratory, gastrointestinal, and ophthalmologic complications. Motor developmental delay is associated with muscle hypoplasia, muscle weakness, and an abnormal muscle fiber pattern in histology in adulthood.</description>
        <dbReference type="MIM" id="615539"/>
    </disease>
    <text>The disease is caused by variants affecting the gene represented in this entry.</text>
</comment>
<comment type="similarity">
    <text evidence="8">Belongs to the dermatan-sulfate isomerase family.</text>
</comment>
<organism>
    <name type="scientific">Homo sapiens</name>
    <name type="common">Human</name>
    <dbReference type="NCBI Taxonomy" id="9606"/>
    <lineage>
        <taxon>Eukaryota</taxon>
        <taxon>Metazoa</taxon>
        <taxon>Chordata</taxon>
        <taxon>Craniata</taxon>
        <taxon>Vertebrata</taxon>
        <taxon>Euteleostomi</taxon>
        <taxon>Mammalia</taxon>
        <taxon>Eutheria</taxon>
        <taxon>Euarchontoglires</taxon>
        <taxon>Primates</taxon>
        <taxon>Haplorrhini</taxon>
        <taxon>Catarrhini</taxon>
        <taxon>Hominidae</taxon>
        <taxon>Homo</taxon>
    </lineage>
</organism>
<dbReference type="EC" id="5.1.3.19" evidence="3 4 6 7"/>
<dbReference type="EMBL" id="AF098066">
    <property type="protein sequence ID" value="AAF00087.1"/>
    <property type="molecule type" value="mRNA"/>
</dbReference>
<dbReference type="EMBL" id="Z84488">
    <property type="status" value="NOT_ANNOTATED_CDS"/>
    <property type="molecule type" value="Genomic_DNA"/>
</dbReference>
<dbReference type="EMBL" id="BC039245">
    <property type="protein sequence ID" value="AAH39245.1"/>
    <property type="molecule type" value="mRNA"/>
</dbReference>
<dbReference type="CCDS" id="CCDS5107.1"/>
<dbReference type="RefSeq" id="NP_001074445.1">
    <property type="nucleotide sequence ID" value="NM_001080976.3"/>
</dbReference>
<dbReference type="RefSeq" id="NP_001309866.1">
    <property type="nucleotide sequence ID" value="NM_001322937.2"/>
</dbReference>
<dbReference type="RefSeq" id="NP_001309867.1">
    <property type="nucleotide sequence ID" value="NM_001322938.2"/>
</dbReference>
<dbReference type="RefSeq" id="NP_001309868.1">
    <property type="nucleotide sequence ID" value="NM_001322939.1"/>
</dbReference>
<dbReference type="RefSeq" id="NP_001309869.1">
    <property type="nucleotide sequence ID" value="NM_001322940.1"/>
</dbReference>
<dbReference type="RefSeq" id="NP_001309870.1">
    <property type="nucleotide sequence ID" value="NM_001322941.1"/>
</dbReference>
<dbReference type="RefSeq" id="NP_001309872.1">
    <property type="nucleotide sequence ID" value="NM_001322943.1"/>
</dbReference>
<dbReference type="RefSeq" id="NP_001309873.1">
    <property type="nucleotide sequence ID" value="NM_001322944.1"/>
</dbReference>
<dbReference type="RefSeq" id="NP_037484.1">
    <property type="nucleotide sequence ID" value="NM_013352.4"/>
</dbReference>
<dbReference type="RefSeq" id="XP_016866285.1">
    <property type="nucleotide sequence ID" value="XM_017010796.1"/>
</dbReference>
<dbReference type="PDB" id="6HZN">
    <property type="method" value="X-ray"/>
    <property type="resolution" value="2.41 A"/>
    <property type="chains" value="A=23-775"/>
</dbReference>
<dbReference type="PDBsum" id="6HZN"/>
<dbReference type="SMR" id="Q9UL01"/>
<dbReference type="BioGRID" id="118977">
    <property type="interactions" value="34"/>
</dbReference>
<dbReference type="FunCoup" id="Q9UL01">
    <property type="interactions" value="1086"/>
</dbReference>
<dbReference type="IntAct" id="Q9UL01">
    <property type="interactions" value="27"/>
</dbReference>
<dbReference type="MINT" id="Q9UL01"/>
<dbReference type="STRING" id="9606.ENSP00000494147"/>
<dbReference type="GlyCosmos" id="Q9UL01">
    <property type="glycosylation" value="5 sites, No reported glycans"/>
</dbReference>
<dbReference type="GlyGen" id="Q9UL01">
    <property type="glycosylation" value="6 sites, 1 N-linked glycan (1 site), 1 O-linked glycan (1 site)"/>
</dbReference>
<dbReference type="iPTMnet" id="Q9UL01"/>
<dbReference type="PhosphoSitePlus" id="Q9UL01"/>
<dbReference type="BioMuta" id="DSE"/>
<dbReference type="DMDM" id="74762778"/>
<dbReference type="jPOST" id="Q9UL01"/>
<dbReference type="MassIVE" id="Q9UL01"/>
<dbReference type="PaxDb" id="9606-ENSP00000332151"/>
<dbReference type="PeptideAtlas" id="Q9UL01"/>
<dbReference type="ProteomicsDB" id="84921"/>
<dbReference type="Antibodypedia" id="3106">
    <property type="antibodies" value="80 antibodies from 20 providers"/>
</dbReference>
<dbReference type="DNASU" id="29940"/>
<dbReference type="Ensembl" id="ENST00000331677.7">
    <property type="protein sequence ID" value="ENSP00000332151.2"/>
    <property type="gene ID" value="ENSG00000111817.19"/>
</dbReference>
<dbReference type="Ensembl" id="ENST00000452085.7">
    <property type="protein sequence ID" value="ENSP00000404049.2"/>
    <property type="gene ID" value="ENSG00000111817.19"/>
</dbReference>
<dbReference type="Ensembl" id="ENST00000644252.3">
    <property type="protein sequence ID" value="ENSP00000494147.2"/>
    <property type="gene ID" value="ENSG00000111817.19"/>
</dbReference>
<dbReference type="GeneID" id="29940"/>
<dbReference type="KEGG" id="hsa:29940"/>
<dbReference type="MANE-Select" id="ENST00000644252.3">
    <property type="protein sequence ID" value="ENSP00000494147.2"/>
    <property type="RefSeq nucleotide sequence ID" value="NM_013352.4"/>
    <property type="RefSeq protein sequence ID" value="NP_037484.1"/>
</dbReference>
<dbReference type="UCSC" id="uc003pws.5">
    <property type="organism name" value="human"/>
</dbReference>
<dbReference type="AGR" id="HGNC:21144"/>
<dbReference type="CTD" id="29940"/>
<dbReference type="DisGeNET" id="29940"/>
<dbReference type="GeneCards" id="DSE"/>
<dbReference type="HGNC" id="HGNC:21144">
    <property type="gene designation" value="DSE"/>
</dbReference>
<dbReference type="HPA" id="ENSG00000111817">
    <property type="expression patterns" value="Low tissue specificity"/>
</dbReference>
<dbReference type="MalaCards" id="DSE"/>
<dbReference type="MIM" id="605942">
    <property type="type" value="gene"/>
</dbReference>
<dbReference type="MIM" id="615539">
    <property type="type" value="phenotype"/>
</dbReference>
<dbReference type="neXtProt" id="NX_Q9UL01"/>
<dbReference type="OpenTargets" id="ENSG00000111817"/>
<dbReference type="Orphanet" id="2953">
    <property type="disease" value="Musculocontractural Ehlers-Danlos syndrome"/>
</dbReference>
<dbReference type="PharmGKB" id="PA162384080"/>
<dbReference type="VEuPathDB" id="HostDB:ENSG00000111817"/>
<dbReference type="eggNOG" id="ENOG502QPWZ">
    <property type="taxonomic scope" value="Eukaryota"/>
</dbReference>
<dbReference type="GeneTree" id="ENSGT00390000006522"/>
<dbReference type="HOGENOM" id="CLU_308813_0_0_1"/>
<dbReference type="InParanoid" id="Q9UL01"/>
<dbReference type="OMA" id="FFIHAVC"/>
<dbReference type="OrthoDB" id="5946629at2759"/>
<dbReference type="PAN-GO" id="Q9UL01">
    <property type="GO annotations" value="3 GO annotations based on evolutionary models"/>
</dbReference>
<dbReference type="PhylomeDB" id="Q9UL01"/>
<dbReference type="TreeFam" id="TF334118"/>
<dbReference type="BioCyc" id="MetaCyc:HS03472-MONOMER"/>
<dbReference type="BRENDA" id="5.1.3.19">
    <property type="organism ID" value="2681"/>
</dbReference>
<dbReference type="PathwayCommons" id="Q9UL01"/>
<dbReference type="Reactome" id="R-HSA-2022923">
    <property type="pathway name" value="Dermatan sulfate biosynthesis"/>
</dbReference>
<dbReference type="SignaLink" id="Q9UL01"/>
<dbReference type="UniPathway" id="UPA00755"/>
<dbReference type="UniPathway" id="UPA00756"/>
<dbReference type="BioGRID-ORCS" id="29940">
    <property type="hits" value="10 hits in 1149 CRISPR screens"/>
</dbReference>
<dbReference type="ChiTaRS" id="DSE">
    <property type="organism name" value="human"/>
</dbReference>
<dbReference type="GeneWiki" id="DSE_(gene)"/>
<dbReference type="GenomeRNAi" id="29940"/>
<dbReference type="Pharos" id="Q9UL01">
    <property type="development level" value="Tbio"/>
</dbReference>
<dbReference type="PRO" id="PR:Q9UL01"/>
<dbReference type="Proteomes" id="UP000005640">
    <property type="component" value="Chromosome 6"/>
</dbReference>
<dbReference type="RNAct" id="Q9UL01">
    <property type="molecule type" value="protein"/>
</dbReference>
<dbReference type="Bgee" id="ENSG00000111817">
    <property type="expression patterns" value="Expressed in parietal pleura and 198 other cell types or tissues"/>
</dbReference>
<dbReference type="ExpressionAtlas" id="Q9UL01">
    <property type="expression patterns" value="baseline and differential"/>
</dbReference>
<dbReference type="GO" id="GO:0030659">
    <property type="term" value="C:cytoplasmic vesicle membrane"/>
    <property type="evidence" value="ECO:0007669"/>
    <property type="project" value="UniProtKB-SubCell"/>
</dbReference>
<dbReference type="GO" id="GO:0005783">
    <property type="term" value="C:endoplasmic reticulum"/>
    <property type="evidence" value="ECO:0000314"/>
    <property type="project" value="HGNC-UCL"/>
</dbReference>
<dbReference type="GO" id="GO:0005789">
    <property type="term" value="C:endoplasmic reticulum membrane"/>
    <property type="evidence" value="ECO:0007669"/>
    <property type="project" value="UniProtKB-SubCell"/>
</dbReference>
<dbReference type="GO" id="GO:0005794">
    <property type="term" value="C:Golgi apparatus"/>
    <property type="evidence" value="ECO:0000314"/>
    <property type="project" value="HGNC-UCL"/>
</dbReference>
<dbReference type="GO" id="GO:0000139">
    <property type="term" value="C:Golgi membrane"/>
    <property type="evidence" value="ECO:0000304"/>
    <property type="project" value="Reactome"/>
</dbReference>
<dbReference type="GO" id="GO:0047757">
    <property type="term" value="F:chondroitin-glucuronate 5-epimerase activity"/>
    <property type="evidence" value="ECO:0000314"/>
    <property type="project" value="HGNC-UCL"/>
</dbReference>
<dbReference type="GO" id="GO:0046872">
    <property type="term" value="F:metal ion binding"/>
    <property type="evidence" value="ECO:0007669"/>
    <property type="project" value="UniProtKB-KW"/>
</dbReference>
<dbReference type="GO" id="GO:0050651">
    <property type="term" value="P:dermatan sulfate proteoglycan biosynthetic process"/>
    <property type="evidence" value="ECO:0000314"/>
    <property type="project" value="UniProtKB"/>
</dbReference>
<dbReference type="GO" id="GO:0015012">
    <property type="term" value="P:heparan sulfate proteoglycan biosynthetic process"/>
    <property type="evidence" value="ECO:0007669"/>
    <property type="project" value="UniProtKB-UniPathway"/>
</dbReference>
<dbReference type="FunFam" id="1.50.10.100:FF:000001">
    <property type="entry name" value="dermatan-sulfate epimerase isoform X1"/>
    <property type="match status" value="1"/>
</dbReference>
<dbReference type="FunFam" id="2.70.98.70:FF:000001">
    <property type="entry name" value="dermatan-sulfate epimerase isoform X1"/>
    <property type="match status" value="1"/>
</dbReference>
<dbReference type="Gene3D" id="2.70.98.70">
    <property type="match status" value="1"/>
</dbReference>
<dbReference type="Gene3D" id="1.50.10.100">
    <property type="entry name" value="Chondroitin AC/alginate lyase"/>
    <property type="match status" value="1"/>
</dbReference>
<dbReference type="InterPro" id="IPR008929">
    <property type="entry name" value="Chondroitin_lyas"/>
</dbReference>
<dbReference type="InterPro" id="IPR052447">
    <property type="entry name" value="Dermatan-Sulfate_Isomerase"/>
</dbReference>
<dbReference type="InterPro" id="IPR032518">
    <property type="entry name" value="HepII_N"/>
</dbReference>
<dbReference type="PANTHER" id="PTHR15532">
    <property type="match status" value="1"/>
</dbReference>
<dbReference type="PANTHER" id="PTHR15532:SF3">
    <property type="entry name" value="DERMATAN-SULFATE EPIMERASE"/>
    <property type="match status" value="1"/>
</dbReference>
<dbReference type="Pfam" id="PF16332">
    <property type="entry name" value="DUF4962"/>
    <property type="match status" value="1"/>
</dbReference>
<dbReference type="SUPFAM" id="SSF48230">
    <property type="entry name" value="Chondroitin AC/alginate lyase"/>
    <property type="match status" value="1"/>
</dbReference>
<evidence type="ECO:0000255" key="1"/>
<evidence type="ECO:0000269" key="2">
    <source>
    </source>
</evidence>
<evidence type="ECO:0000269" key="3">
    <source>
    </source>
</evidence>
<evidence type="ECO:0000269" key="4">
    <source>
    </source>
</evidence>
<evidence type="ECO:0000269" key="5">
    <source>
    </source>
</evidence>
<evidence type="ECO:0000269" key="6">
    <source>
    </source>
</evidence>
<evidence type="ECO:0000269" key="7">
    <source ref="7"/>
</evidence>
<evidence type="ECO:0000305" key="8"/>
<evidence type="ECO:0000305" key="9">
    <source>
    </source>
</evidence>
<evidence type="ECO:0000305" key="10">
    <source>
    </source>
</evidence>
<evidence type="ECO:0000305" key="11">
    <source>
    </source>
</evidence>
<evidence type="ECO:0000305" key="12">
    <source ref="7"/>
</evidence>
<evidence type="ECO:0007744" key="13">
    <source>
        <dbReference type="PDB" id="6HZN"/>
    </source>
</evidence>
<evidence type="ECO:0007829" key="14">
    <source>
        <dbReference type="PDB" id="6HZN"/>
    </source>
</evidence>
<sequence>MRTHTRGAPSVFFIYLLCFVSAYITDENPEVMIPFTNANYDSHPMLYFSRAEVAELQLRAASSHEHIAARLTEAVHTMLSSPLEYLPPWDPKDYSARWNEIFGNNLGALAMFCVLYPENIEARDMAKDYMERMAAQPSWLVKDAPWDEVPLAHSLVGFATAYDFLYNYLSKTQQEKFLEVIANASGYMYETSYRRGWGFQYLHNHQPTNCMALLTGSLVLMNQGYLQEAYLWTKQVLTIMEKSLVLLREVTDGSLYEGVAYGSYTTRSLFQYMFLVQRHFNINHFGHPWLKQHFAFMYRTILPGFQRTVAIADSNYNWFYGPESQLVFLDKFVMRNGSGNWLADQIRRNRVVEGPGTPSKGQRWCTLHTEFLWYDGSLKSVPPPDFGTPTLHYFEDWGVVTYGSALPAEINRSFLSFKSGKLGGRAIYDIVHRNKYKDWIKGWRNFNAGHEHPDQNSFTFAPNGVPFITEALYGPKYTFFNNVLMFSPAVSKSCFSPWVGQVTEDCSSKWSKYKHDLAASCQGRVVAAEEKNGVVFIRGEGVGAYNPQLNLKNVQRNLILLHPQLLLLVDQIHLGEESPLETAASFFHNVDVPFEETVVDGVHGAFIRQRDGLYKMYWMDDTGYSEKATFASVTYPRGYPYNGTNYVNVTMHLRSPITRAAYLFIGPSIDVQSFTVHGDSQQLDVFIATSKHAYATYLWTGEATGQSAFAQVIADRHKILFDRNSAIKSSIVPEVKDYAAIVEQNLQHFKPVFQLLEKQILSRVRNTASFRKTAERLLRFSDKRQTEEAIDRIFAISQQQQQQSKSKKNRRAGKRYKFVDAVPDIFAQIEVNEKKIRQKAQILAQKELPIDEDEEMKDLLDFADVTYEKHKNGGLIKGRFGQARMVTTTHSRAPSLSASYTRLFLILNIAIFFVMLAMQLTYFQRAQSLHGQRCLYAVLLIDSCILLWLYSSCSQSQC</sequence>
<keyword id="KW-0002">3D-structure</keyword>
<keyword id="KW-0968">Cytoplasmic vesicle</keyword>
<keyword id="KW-0225">Disease variant</keyword>
<keyword id="KW-0248">Ehlers-Danlos syndrome</keyword>
<keyword id="KW-0256">Endoplasmic reticulum</keyword>
<keyword id="KW-0325">Glycoprotein</keyword>
<keyword id="KW-0333">Golgi apparatus</keyword>
<keyword id="KW-0413">Isomerase</keyword>
<keyword id="KW-0464">Manganese</keyword>
<keyword id="KW-0472">Membrane</keyword>
<keyword id="KW-0479">Metal-binding</keyword>
<keyword id="KW-0492">Microsome</keyword>
<keyword id="KW-1267">Proteomics identification</keyword>
<keyword id="KW-1185">Reference proteome</keyword>
<keyword id="KW-0732">Signal</keyword>
<keyword id="KW-0812">Transmembrane</keyword>
<keyword id="KW-1133">Transmembrane helix</keyword>
<reference key="1">
    <citation type="journal article" date="2000" name="J. Immunol.">
        <title>Identification of a gene coding for a new squamous cell carcinoma antigen recognized by the CTL.</title>
        <authorList>
            <person name="Nakao M."/>
            <person name="Shichijo S."/>
            <person name="Imaizumi T."/>
            <person name="Inoue Y."/>
            <person name="Matsunaga K."/>
            <person name="Yamada A."/>
            <person name="Kikuchi M."/>
            <person name="Tsuda N."/>
            <person name="Ohta K."/>
            <person name="Takamori S."/>
            <person name="Yamana H."/>
            <person name="Fujita H."/>
            <person name="Itoh K."/>
        </authorList>
    </citation>
    <scope>NUCLEOTIDE SEQUENCE [MRNA]</scope>
    <scope>SUBCELLULAR LOCATION</scope>
    <scope>TISSUE SPECIFICITY</scope>
</reference>
<reference key="2">
    <citation type="journal article" date="2003" name="Nature">
        <title>The DNA sequence and analysis of human chromosome 6.</title>
        <authorList>
            <person name="Mungall A.J."/>
            <person name="Palmer S.A."/>
            <person name="Sims S.K."/>
            <person name="Edwards C.A."/>
            <person name="Ashurst J.L."/>
            <person name="Wilming L."/>
            <person name="Jones M.C."/>
            <person name="Horton R."/>
            <person name="Hunt S.E."/>
            <person name="Scott C.E."/>
            <person name="Gilbert J.G.R."/>
            <person name="Clamp M.E."/>
            <person name="Bethel G."/>
            <person name="Milne S."/>
            <person name="Ainscough R."/>
            <person name="Almeida J.P."/>
            <person name="Ambrose K.D."/>
            <person name="Andrews T.D."/>
            <person name="Ashwell R.I.S."/>
            <person name="Babbage A.K."/>
            <person name="Bagguley C.L."/>
            <person name="Bailey J."/>
            <person name="Banerjee R."/>
            <person name="Barker D.J."/>
            <person name="Barlow K.F."/>
            <person name="Bates K."/>
            <person name="Beare D.M."/>
            <person name="Beasley H."/>
            <person name="Beasley O."/>
            <person name="Bird C.P."/>
            <person name="Blakey S.E."/>
            <person name="Bray-Allen S."/>
            <person name="Brook J."/>
            <person name="Brown A.J."/>
            <person name="Brown J.Y."/>
            <person name="Burford D.C."/>
            <person name="Burrill W."/>
            <person name="Burton J."/>
            <person name="Carder C."/>
            <person name="Carter N.P."/>
            <person name="Chapman J.C."/>
            <person name="Clark S.Y."/>
            <person name="Clark G."/>
            <person name="Clee C.M."/>
            <person name="Clegg S."/>
            <person name="Cobley V."/>
            <person name="Collier R.E."/>
            <person name="Collins J.E."/>
            <person name="Colman L.K."/>
            <person name="Corby N.R."/>
            <person name="Coville G.J."/>
            <person name="Culley K.M."/>
            <person name="Dhami P."/>
            <person name="Davies J."/>
            <person name="Dunn M."/>
            <person name="Earthrowl M.E."/>
            <person name="Ellington A.E."/>
            <person name="Evans K.A."/>
            <person name="Faulkner L."/>
            <person name="Francis M.D."/>
            <person name="Frankish A."/>
            <person name="Frankland J."/>
            <person name="French L."/>
            <person name="Garner P."/>
            <person name="Garnett J."/>
            <person name="Ghori M.J."/>
            <person name="Gilby L.M."/>
            <person name="Gillson C.J."/>
            <person name="Glithero R.J."/>
            <person name="Grafham D.V."/>
            <person name="Grant M."/>
            <person name="Gribble S."/>
            <person name="Griffiths C."/>
            <person name="Griffiths M.N.D."/>
            <person name="Hall R."/>
            <person name="Halls K.S."/>
            <person name="Hammond S."/>
            <person name="Harley J.L."/>
            <person name="Hart E.A."/>
            <person name="Heath P.D."/>
            <person name="Heathcott R."/>
            <person name="Holmes S.J."/>
            <person name="Howden P.J."/>
            <person name="Howe K.L."/>
            <person name="Howell G.R."/>
            <person name="Huckle E."/>
            <person name="Humphray S.J."/>
            <person name="Humphries M.D."/>
            <person name="Hunt A.R."/>
            <person name="Johnson C.M."/>
            <person name="Joy A.A."/>
            <person name="Kay M."/>
            <person name="Keenan S.J."/>
            <person name="Kimberley A.M."/>
            <person name="King A."/>
            <person name="Laird G.K."/>
            <person name="Langford C."/>
            <person name="Lawlor S."/>
            <person name="Leongamornlert D.A."/>
            <person name="Leversha M."/>
            <person name="Lloyd C.R."/>
            <person name="Lloyd D.M."/>
            <person name="Loveland J.E."/>
            <person name="Lovell J."/>
            <person name="Martin S."/>
            <person name="Mashreghi-Mohammadi M."/>
            <person name="Maslen G.L."/>
            <person name="Matthews L."/>
            <person name="McCann O.T."/>
            <person name="McLaren S.J."/>
            <person name="McLay K."/>
            <person name="McMurray A."/>
            <person name="Moore M.J.F."/>
            <person name="Mullikin J.C."/>
            <person name="Niblett D."/>
            <person name="Nickerson T."/>
            <person name="Novik K.L."/>
            <person name="Oliver K."/>
            <person name="Overton-Larty E.K."/>
            <person name="Parker A."/>
            <person name="Patel R."/>
            <person name="Pearce A.V."/>
            <person name="Peck A.I."/>
            <person name="Phillimore B.J.C.T."/>
            <person name="Phillips S."/>
            <person name="Plumb R.W."/>
            <person name="Porter K.M."/>
            <person name="Ramsey Y."/>
            <person name="Ranby S.A."/>
            <person name="Rice C.M."/>
            <person name="Ross M.T."/>
            <person name="Searle S.M."/>
            <person name="Sehra H.K."/>
            <person name="Sheridan E."/>
            <person name="Skuce C.D."/>
            <person name="Smith S."/>
            <person name="Smith M."/>
            <person name="Spraggon L."/>
            <person name="Squares S.L."/>
            <person name="Steward C.A."/>
            <person name="Sycamore N."/>
            <person name="Tamlyn-Hall G."/>
            <person name="Tester J."/>
            <person name="Theaker A.J."/>
            <person name="Thomas D.W."/>
            <person name="Thorpe A."/>
            <person name="Tracey A."/>
            <person name="Tromans A."/>
            <person name="Tubby B."/>
            <person name="Wall M."/>
            <person name="Wallis J.M."/>
            <person name="West A.P."/>
            <person name="White S.S."/>
            <person name="Whitehead S.L."/>
            <person name="Whittaker H."/>
            <person name="Wild A."/>
            <person name="Willey D.J."/>
            <person name="Wilmer T.E."/>
            <person name="Wood J.M."/>
            <person name="Wray P.W."/>
            <person name="Wyatt J.C."/>
            <person name="Young L."/>
            <person name="Younger R.M."/>
            <person name="Bentley D.R."/>
            <person name="Coulson A."/>
            <person name="Durbin R.M."/>
            <person name="Hubbard T."/>
            <person name="Sulston J.E."/>
            <person name="Dunham I."/>
            <person name="Rogers J."/>
            <person name="Beck S."/>
        </authorList>
    </citation>
    <scope>NUCLEOTIDE SEQUENCE [LARGE SCALE GENOMIC DNA]</scope>
</reference>
<reference key="3">
    <citation type="journal article" date="2004" name="Genome Res.">
        <title>The status, quality, and expansion of the NIH full-length cDNA project: the Mammalian Gene Collection (MGC).</title>
        <authorList>
            <consortium name="The MGC Project Team"/>
        </authorList>
    </citation>
    <scope>NUCLEOTIDE SEQUENCE [LARGE SCALE MRNA]</scope>
    <source>
        <tissue>Testis</tissue>
    </source>
</reference>
<reference key="4">
    <citation type="journal article" date="1982" name="Biochem. J.">
        <title>Biosynthesis of dermatan sulphate. Assay and properties of the uronosyl C-5 epimerase.</title>
        <authorList>
            <person name="Malmstroem A."/>
            <person name="Aberg L."/>
        </authorList>
    </citation>
    <scope>FUNCTION</scope>
    <scope>CATALYTIC ACTIVITY</scope>
    <scope>COFACTOR</scope>
    <scope>BIOPHYSICOCHEMICAL PROPERTIES</scope>
    <scope>PATHWAY</scope>
    <scope>SUBCELLULAR LOCATION</scope>
</reference>
<reference key="5">
    <citation type="journal article" date="2006" name="J. Biol. Chem.">
        <title>Biosynthesis of dermatan sulfate: chondroitin-glucuronate C5-epimerase is identical to SART2.</title>
        <authorList>
            <person name="Maccarana M."/>
            <person name="Olander B."/>
            <person name="Malmstroem J."/>
            <person name="Tiedemann K."/>
            <person name="Aebersold R."/>
            <person name="Lindahl U."/>
            <person name="Li J.-P."/>
            <person name="Malmstroem A."/>
        </authorList>
    </citation>
    <scope>FUNCTION</scope>
    <scope>CATALYTIC ACTIVITY</scope>
    <scope>PATHWAY</scope>
</reference>
<reference key="6">
    <citation type="journal article" date="2009" name="J. Biol. Chem.">
        <title>Identification of the active site of DS-epimerase 1 and requirement of N-glycosylation for enzyme function.</title>
        <authorList>
            <person name="Pacheco B."/>
            <person name="Maccarana M."/>
            <person name="Goodlett D.R."/>
            <person name="Malmstroem A."/>
            <person name="Malmstroem L."/>
        </authorList>
    </citation>
    <scope>FUNCTION</scope>
    <scope>CATALYTIC ACTIVITY</scope>
    <scope>PATHWAY</scope>
    <scope>ACTIVE SITE</scope>
    <scope>GLYCOSYLATION AT ASN-183; ASN-336; ASN-642 AND ASN-648</scope>
    <scope>MUTAGENESIS OF HIS-203; HIS-205; TYR-256; TYR-261; LYS-331 AND HIS-450</scope>
</reference>
<reference evidence="13" key="7">
    <citation type="journal article" date="2020" name="Chem. Sci.">
        <title>The structure of human dermatan sulfate epimerase 1 emphasizes the importance of C5-epimerization of glucuronic acid in higher organisms.</title>
        <authorList>
            <person name="Hasan M."/>
            <person name="Khakzad H."/>
            <person name="Happonen L."/>
            <person name="Sundin A."/>
            <person name="Unge J."/>
            <person name="Mueller U."/>
            <person name="Malmstrom J."/>
            <person name="Westergren-Thorsson G."/>
            <person name="Malmstrom L."/>
            <person name="Ellervik U."/>
            <person name="Malmstrom A."/>
            <person name="Tykesson E."/>
        </authorList>
    </citation>
    <scope>X-RAY CRYSTALLOGRAPHY (2.41 ANGSTROMS) OF 23-775 IN COMPLEX WITH MANGANESE IONS</scope>
    <scope>FUNCTION</scope>
    <scope>CATALYTIC ACTIVITY</scope>
    <scope>PATHWAY</scope>
    <scope>ACTIVE SITE</scope>
    <scope>GLYCOSYLATION AT ASN-183; ASN-336; ASN-411; ASN-642 AND ASN-648</scope>
    <scope>MUTAGENESIS OF TRP-98; ASP-147; PRO-383; HIS-452; GLU-470 AND TYR-473</scope>
</reference>
<reference key="8">
    <citation type="journal article" date="2013" name="Hum. Mol. Genet.">
        <title>Loss of dermatan sulfate epimerase (DSE) function results in musculocontractural Ehlers-Danlos syndrome.</title>
        <authorList>
            <person name="Mueller T."/>
            <person name="Mizumoto S."/>
            <person name="Suresh I."/>
            <person name="Komatsu Y."/>
            <person name="Vodopiutz J."/>
            <person name="Dundar M."/>
            <person name="Straub V."/>
            <person name="Lingenhel A."/>
            <person name="Melmer A."/>
            <person name="Lechner S."/>
            <person name="Zschocke J."/>
            <person name="Sugahara K."/>
            <person name="Janecke A.R."/>
        </authorList>
    </citation>
    <scope>VARIANT EDSMC2 LEU-268</scope>
    <scope>CHARACTERIZATION OF VARIANT EDSMC2 LEU-268</scope>
</reference>
<gene>
    <name type="primary">DSE</name>
    <name type="synonym">SART2</name>
</gene>
<feature type="signal peptide" evidence="1">
    <location>
        <begin position="1"/>
        <end position="22"/>
    </location>
</feature>
<feature type="chain" id="PRO_0000223311" description="Dermatan-sulfate epimerase">
    <location>
        <begin position="23"/>
        <end position="958"/>
    </location>
</feature>
<feature type="topological domain" description="Lumenal" evidence="8">
    <location>
        <begin position="23"/>
        <end position="902"/>
    </location>
</feature>
<feature type="transmembrane region" description="Helical" evidence="1">
    <location>
        <begin position="903"/>
        <end position="923"/>
    </location>
</feature>
<feature type="topological domain" description="Cytoplasmic" evidence="8">
    <location>
        <begin position="924"/>
        <end position="933"/>
    </location>
</feature>
<feature type="transmembrane region" description="Helical" evidence="1">
    <location>
        <begin position="934"/>
        <end position="954"/>
    </location>
</feature>
<feature type="topological domain" description="Lumenal" evidence="8">
    <location>
        <begin position="955"/>
        <end position="958"/>
    </location>
</feature>
<feature type="active site" description="Proton donor" evidence="4 7">
    <location>
        <position position="205"/>
    </location>
</feature>
<feature type="active site" evidence="4 7">
    <location>
        <position position="261"/>
    </location>
</feature>
<feature type="active site" evidence="4 7">
    <location>
        <position position="473"/>
    </location>
</feature>
<feature type="binding site" evidence="7 13">
    <location>
        <position position="452"/>
    </location>
    <ligand>
        <name>Mn(2+)</name>
        <dbReference type="ChEBI" id="CHEBI:29035"/>
    </ligand>
</feature>
<feature type="binding site" evidence="7 13">
    <location>
        <position position="470"/>
    </location>
    <ligand>
        <name>Mn(2+)</name>
        <dbReference type="ChEBI" id="CHEBI:29035"/>
    </ligand>
</feature>
<feature type="binding site" evidence="7 13">
    <location>
        <position position="481"/>
    </location>
    <ligand>
        <name>Mn(2+)</name>
        <dbReference type="ChEBI" id="CHEBI:29035"/>
    </ligand>
</feature>
<feature type="site" description="Critical for catalysis" evidence="4">
    <location>
        <position position="450"/>
    </location>
</feature>
<feature type="glycosylation site" description="N-linked (GlcNAc...) (complex) asparagine" evidence="4 7 13">
    <location>
        <position position="183"/>
    </location>
</feature>
<feature type="glycosylation site" description="N-linked (GlcNAc...) (high mannose) asparagine" evidence="4 7 13">
    <location>
        <position position="336"/>
    </location>
</feature>
<feature type="glycosylation site" description="N-linked (GlcNAc...) (complex) asparagine" evidence="7 13">
    <location>
        <position position="411"/>
    </location>
</feature>
<feature type="glycosylation site" description="N-linked (GlcNAc...) (complex) asparagine" evidence="4 7 13">
    <location>
        <position position="642"/>
    </location>
</feature>
<feature type="glycosylation site" description="N-linked (GlcNAc...) (paucimannose) asparagine" evidence="4 7 13">
    <location>
        <position position="648"/>
    </location>
</feature>
<feature type="sequence variant" id="VAR_034481" description="In dbSNP:rs10485183.">
    <original>T</original>
    <variation>I</variation>
    <location>
        <position position="25"/>
    </location>
</feature>
<feature type="sequence variant" id="VAR_053833" description="In dbSNP:rs35548455.">
    <original>P</original>
    <variation>L</variation>
    <location>
        <position position="34"/>
    </location>
</feature>
<feature type="sequence variant" id="VAR_070911" description="In EDSMC2; shows a loss of epimerase activity towards partially desulfated dermatan sulfate; patient-derived fibroblasts show also a significant reduction in activity; dbSNP:rs398122361." evidence="5">
    <original>S</original>
    <variation>L</variation>
    <location>
        <position position="268"/>
    </location>
</feature>
<feature type="sequence variant" id="VAR_053834" description="In dbSNP:rs34994230.">
    <original>I</original>
    <variation>V</variation>
    <location>
        <position position="282"/>
    </location>
</feature>
<feature type="mutagenesis site" description="Severely impairs catalytic activity." evidence="7">
    <original>W</original>
    <variation>A</variation>
    <location>
        <position position="98"/>
    </location>
</feature>
<feature type="mutagenesis site" description="Impairs catalytic activity." evidence="7">
    <original>D</original>
    <variation>A</variation>
    <location>
        <position position="147"/>
    </location>
</feature>
<feature type="mutagenesis site" description="Severely impairs catalytic activity." evidence="4">
    <original>H</original>
    <variation>A</variation>
    <variation>N</variation>
    <location>
        <position position="203"/>
    </location>
</feature>
<feature type="mutagenesis site" description="Abolishes catalytic activity." evidence="4">
    <original>H</original>
    <variation>A</variation>
    <variation>N</variation>
    <location>
        <position position="205"/>
    </location>
</feature>
<feature type="mutagenesis site" description="Moderately reduced catalytic activity." evidence="4">
    <original>Y</original>
    <variation>A</variation>
    <location>
        <position position="256"/>
    </location>
</feature>
<feature type="mutagenesis site" description="Abolishes catalytic activity." evidence="4">
    <original>Y</original>
    <variation>A</variation>
    <variation>F</variation>
    <location>
        <position position="261"/>
    </location>
</feature>
<feature type="mutagenesis site" description="No significant effect on catalytic activity." evidence="4">
    <original>K</original>
    <variation>A</variation>
    <location>
        <position position="331"/>
    </location>
</feature>
<feature type="mutagenesis site" description="Very low levels of protein expression and no detectable catalytic activity." evidence="7">
    <original>P</original>
    <variation>A</variation>
    <location>
        <position position="383"/>
    </location>
</feature>
<feature type="mutagenesis site" description="Abolishes catalytic activity." evidence="4">
    <original>H</original>
    <variation>A</variation>
    <variation>N</variation>
    <location>
        <position position="450"/>
    </location>
</feature>
<feature type="mutagenesis site" description="Abolishes catalytic activity." evidence="7">
    <original>H</original>
    <variation>A</variation>
    <location>
        <position position="452"/>
    </location>
</feature>
<feature type="mutagenesis site" description="Abolishes catalytic activity." evidence="7">
    <original>E</original>
    <variation>A</variation>
    <location>
        <position position="470"/>
    </location>
</feature>
<feature type="mutagenesis site" description="Abolishes catalytic activity." evidence="7">
    <original>Y</original>
    <variation>A</variation>
    <location>
        <position position="473"/>
    </location>
</feature>
<feature type="helix" evidence="14">
    <location>
        <begin position="50"/>
        <end position="52"/>
    </location>
</feature>
<feature type="helix" evidence="14">
    <location>
        <begin position="53"/>
        <end position="61"/>
    </location>
</feature>
<feature type="helix" evidence="14">
    <location>
        <begin position="65"/>
        <end position="80"/>
    </location>
</feature>
<feature type="helix" evidence="14">
    <location>
        <begin position="82"/>
        <end position="85"/>
    </location>
</feature>
<feature type="helix" evidence="14">
    <location>
        <begin position="91"/>
        <end position="94"/>
    </location>
</feature>
<feature type="helix" evidence="14">
    <location>
        <begin position="101"/>
        <end position="115"/>
    </location>
</feature>
<feature type="helix" evidence="14">
    <location>
        <begin position="120"/>
        <end position="134"/>
    </location>
</feature>
<feature type="helix" evidence="14">
    <location>
        <begin position="149"/>
        <end position="165"/>
    </location>
</feature>
<feature type="helix" evidence="14">
    <location>
        <begin position="166"/>
        <end position="168"/>
    </location>
</feature>
<feature type="helix" evidence="14">
    <location>
        <begin position="171"/>
        <end position="191"/>
    </location>
</feature>
<feature type="turn" evidence="14">
    <location>
        <begin position="192"/>
        <end position="194"/>
    </location>
</feature>
<feature type="helix" evidence="14">
    <location>
        <begin position="196"/>
        <end position="198"/>
    </location>
</feature>
<feature type="helix" evidence="14">
    <location>
        <begin position="205"/>
        <end position="222"/>
    </location>
</feature>
<feature type="helix" evidence="14">
    <location>
        <begin position="226"/>
        <end position="247"/>
    </location>
</feature>
<feature type="helix" evidence="14">
    <location>
        <begin position="258"/>
        <end position="280"/>
    </location>
</feature>
<feature type="helix" evidence="14">
    <location>
        <begin position="288"/>
        <end position="298"/>
    </location>
</feature>
<feature type="strand" evidence="14">
    <location>
        <begin position="299"/>
        <end position="301"/>
    </location>
</feature>
<feature type="helix" evidence="14">
    <location>
        <begin position="323"/>
        <end position="332"/>
    </location>
</feature>
<feature type="helix" evidence="14">
    <location>
        <begin position="338"/>
        <end position="349"/>
    </location>
</feature>
<feature type="strand" evidence="14">
    <location>
        <begin position="352"/>
        <end position="354"/>
    </location>
</feature>
<feature type="turn" evidence="14">
    <location>
        <begin position="360"/>
        <end position="366"/>
    </location>
</feature>
<feature type="helix" evidence="14">
    <location>
        <begin position="367"/>
        <end position="373"/>
    </location>
</feature>
<feature type="turn" evidence="14">
    <location>
        <begin position="384"/>
        <end position="387"/>
    </location>
</feature>
<feature type="strand" evidence="14">
    <location>
        <begin position="391"/>
        <end position="394"/>
    </location>
</feature>
<feature type="turn" evidence="14">
    <location>
        <begin position="395"/>
        <end position="398"/>
    </location>
</feature>
<feature type="strand" evidence="14">
    <location>
        <begin position="399"/>
        <end position="403"/>
    </location>
</feature>
<feature type="strand" evidence="14">
    <location>
        <begin position="414"/>
        <end position="418"/>
    </location>
</feature>
<feature type="helix" evidence="14">
    <location>
        <begin position="424"/>
        <end position="432"/>
    </location>
</feature>
<feature type="turn" evidence="14">
    <location>
        <begin position="437"/>
        <end position="439"/>
    </location>
</feature>
<feature type="helix" evidence="14">
    <location>
        <begin position="442"/>
        <end position="445"/>
    </location>
</feature>
<feature type="strand" evidence="14">
    <location>
        <begin position="457"/>
        <end position="461"/>
    </location>
</feature>
<feature type="helix" evidence="14">
    <location>
        <begin position="462"/>
        <end position="464"/>
    </location>
</feature>
<feature type="helix" evidence="14">
    <location>
        <begin position="478"/>
        <end position="480"/>
    </location>
</feature>
<feature type="strand" evidence="14">
    <location>
        <begin position="484"/>
        <end position="488"/>
    </location>
</feature>
<feature type="helix" evidence="14">
    <location>
        <begin position="515"/>
        <end position="518"/>
    </location>
</feature>
<feature type="strand" evidence="14">
    <location>
        <begin position="524"/>
        <end position="531"/>
    </location>
</feature>
<feature type="strand" evidence="14">
    <location>
        <begin position="534"/>
        <end position="540"/>
    </location>
</feature>
<feature type="helix" evidence="14">
    <location>
        <begin position="542"/>
        <end position="544"/>
    </location>
</feature>
<feature type="helix" evidence="14">
    <location>
        <begin position="547"/>
        <end position="549"/>
    </location>
</feature>
<feature type="strand" evidence="14">
    <location>
        <begin position="551"/>
        <end position="562"/>
    </location>
</feature>
<feature type="strand" evidence="14">
    <location>
        <begin position="565"/>
        <end position="574"/>
    </location>
</feature>
<feature type="strand" evidence="14">
    <location>
        <begin position="582"/>
        <end position="592"/>
    </location>
</feature>
<feature type="strand" evidence="14">
    <location>
        <begin position="595"/>
        <end position="599"/>
    </location>
</feature>
<feature type="strand" evidence="14">
    <location>
        <begin position="602"/>
        <end position="609"/>
    </location>
</feature>
<feature type="strand" evidence="14">
    <location>
        <begin position="612"/>
        <end position="620"/>
    </location>
</feature>
<feature type="strand" evidence="14">
    <location>
        <begin position="629"/>
        <end position="633"/>
    </location>
</feature>
<feature type="strand" evidence="14">
    <location>
        <begin position="639"/>
        <end position="641"/>
    </location>
</feature>
<feature type="strand" evidence="14">
    <location>
        <begin position="644"/>
        <end position="652"/>
    </location>
</feature>
<feature type="strand" evidence="14">
    <location>
        <begin position="655"/>
        <end position="665"/>
    </location>
</feature>
<feature type="strand" evidence="14">
    <location>
        <begin position="671"/>
        <end position="678"/>
    </location>
</feature>
<feature type="strand" evidence="14">
    <location>
        <begin position="680"/>
        <end position="691"/>
    </location>
</feature>
<feature type="strand" evidence="14">
    <location>
        <begin position="693"/>
        <end position="701"/>
    </location>
</feature>
<feature type="strand" evidence="14">
    <location>
        <begin position="704"/>
        <end position="707"/>
    </location>
</feature>
<feature type="strand" evidence="14">
    <location>
        <begin position="709"/>
        <end position="713"/>
    </location>
</feature>
<feature type="strand" evidence="14">
    <location>
        <begin position="718"/>
        <end position="721"/>
    </location>
</feature>
<feature type="helix" evidence="14">
    <location>
        <begin position="723"/>
        <end position="725"/>
    </location>
</feature>
<feature type="helix" evidence="14">
    <location>
        <begin position="738"/>
        <end position="746"/>
    </location>
</feature>
<feature type="helix" evidence="14">
    <location>
        <begin position="750"/>
        <end position="765"/>
    </location>
</feature>
<name>DSE_HUMAN</name>
<accession>Q9UL01</accession>
<accession>Q5R3K6</accession>
<proteinExistence type="evidence at protein level"/>
<protein>
    <recommendedName>
        <fullName>Dermatan-sulfate epimerase</fullName>
        <shortName>DS epimerase</shortName>
        <ecNumber evidence="3 4 6 7">5.1.3.19</ecNumber>
    </recommendedName>
    <alternativeName>
        <fullName>Chondroitin-glucuronate 5-epimerase</fullName>
    </alternativeName>
    <alternativeName>
        <fullName>Squamous cell carcinoma antigen recognized by T-cells 2</fullName>
        <shortName>SART-2</shortName>
    </alternativeName>
</protein>